<organism>
    <name type="scientific">Escherichia coli (strain ATCC 8739 / DSM 1576 / NBRC 3972 / NCIMB 8545 / WDCM 00012 / Crooks)</name>
    <dbReference type="NCBI Taxonomy" id="481805"/>
    <lineage>
        <taxon>Bacteria</taxon>
        <taxon>Pseudomonadati</taxon>
        <taxon>Pseudomonadota</taxon>
        <taxon>Gammaproteobacteria</taxon>
        <taxon>Enterobacterales</taxon>
        <taxon>Enterobacteriaceae</taxon>
        <taxon>Escherichia</taxon>
    </lineage>
</organism>
<sequence>MTVQTSKNPQVDIAEDNAFFPSEYSLSQYTSPVSDLDGVDYPKPYRGKHKILVIAADERYLPTDNGKLFSTGNHPIETLLPLYHLHAAGFEFEVATISGLMTKFEYWAMPHKDEKVMPFFEQHKSLFRNPKKLADVVASLNADSEYAAIFVPGGHGALIGLPESQDVAAALQWAIKNDRFVISLCHGPAAFLALRHGDNPLNGYSICAFPDAADKQTPEIGYMPGHLTWYFGEELKKMGMNIINDDITGRVHKDRKVLTGDSPFAANALGKLAAQEMLAAYAG</sequence>
<gene>
    <name evidence="1" type="primary">hchA</name>
    <name type="ordered locus">EcolC_1678</name>
</gene>
<reference key="1">
    <citation type="submission" date="2008-02" db="EMBL/GenBank/DDBJ databases">
        <title>Complete sequence of Escherichia coli C str. ATCC 8739.</title>
        <authorList>
            <person name="Copeland A."/>
            <person name="Lucas S."/>
            <person name="Lapidus A."/>
            <person name="Glavina del Rio T."/>
            <person name="Dalin E."/>
            <person name="Tice H."/>
            <person name="Bruce D."/>
            <person name="Goodwin L."/>
            <person name="Pitluck S."/>
            <person name="Kiss H."/>
            <person name="Brettin T."/>
            <person name="Detter J.C."/>
            <person name="Han C."/>
            <person name="Kuske C.R."/>
            <person name="Schmutz J."/>
            <person name="Larimer F."/>
            <person name="Land M."/>
            <person name="Hauser L."/>
            <person name="Kyrpides N."/>
            <person name="Mikhailova N."/>
            <person name="Ingram L."/>
            <person name="Richardson P."/>
        </authorList>
    </citation>
    <scope>NUCLEOTIDE SEQUENCE [LARGE SCALE GENOMIC DNA]</scope>
    <source>
        <strain>ATCC 8739 / DSM 1576 / NBRC 3972 / NCIMB 8545 / WDCM 00012 / Crooks</strain>
    </source>
</reference>
<keyword id="KW-0963">Cytoplasm</keyword>
<keyword id="KW-0227">DNA damage</keyword>
<keyword id="KW-0234">DNA repair</keyword>
<keyword id="KW-0378">Hydrolase</keyword>
<keyword id="KW-0479">Metal-binding</keyword>
<keyword id="KW-0346">Stress response</keyword>
<keyword id="KW-0862">Zinc</keyword>
<evidence type="ECO:0000255" key="1">
    <source>
        <dbReference type="HAMAP-Rule" id="MF_01046"/>
    </source>
</evidence>
<proteinExistence type="inferred from homology"/>
<dbReference type="EC" id="3.1.2.-" evidence="1"/>
<dbReference type="EC" id="3.5.1.-" evidence="1"/>
<dbReference type="EC" id="3.5.1.124" evidence="1"/>
<dbReference type="EMBL" id="CP000946">
    <property type="protein sequence ID" value="ACA77330.1"/>
    <property type="molecule type" value="Genomic_DNA"/>
</dbReference>
<dbReference type="RefSeq" id="WP_000218214.1">
    <property type="nucleotide sequence ID" value="NZ_MTFT01000011.1"/>
</dbReference>
<dbReference type="SMR" id="B1IZU5"/>
<dbReference type="MEROPS" id="C56.006"/>
<dbReference type="GeneID" id="75205795"/>
<dbReference type="KEGG" id="ecl:EcolC_1678"/>
<dbReference type="HOGENOM" id="CLU_066933_0_0_6"/>
<dbReference type="GO" id="GO:0005737">
    <property type="term" value="C:cytoplasm"/>
    <property type="evidence" value="ECO:0007669"/>
    <property type="project" value="UniProtKB-SubCell"/>
</dbReference>
<dbReference type="GO" id="GO:0019172">
    <property type="term" value="F:glyoxalase III activity"/>
    <property type="evidence" value="ECO:0007669"/>
    <property type="project" value="TreeGrafter"/>
</dbReference>
<dbReference type="GO" id="GO:0036524">
    <property type="term" value="F:protein deglycase activity"/>
    <property type="evidence" value="ECO:0007669"/>
    <property type="project" value="UniProtKB-UniRule"/>
</dbReference>
<dbReference type="GO" id="GO:0016790">
    <property type="term" value="F:thiolester hydrolase activity"/>
    <property type="evidence" value="ECO:0007669"/>
    <property type="project" value="UniProtKB-UniRule"/>
</dbReference>
<dbReference type="GO" id="GO:0008270">
    <property type="term" value="F:zinc ion binding"/>
    <property type="evidence" value="ECO:0007669"/>
    <property type="project" value="UniProtKB-UniRule"/>
</dbReference>
<dbReference type="GO" id="GO:0006281">
    <property type="term" value="P:DNA repair"/>
    <property type="evidence" value="ECO:0007669"/>
    <property type="project" value="UniProtKB-UniRule"/>
</dbReference>
<dbReference type="GO" id="GO:0019243">
    <property type="term" value="P:methylglyoxal catabolic process to D-lactate via S-lactoyl-glutathione"/>
    <property type="evidence" value="ECO:0007669"/>
    <property type="project" value="TreeGrafter"/>
</dbReference>
<dbReference type="GO" id="GO:0030091">
    <property type="term" value="P:protein repair"/>
    <property type="evidence" value="ECO:0007669"/>
    <property type="project" value="UniProtKB-UniRule"/>
</dbReference>
<dbReference type="FunFam" id="3.40.50.880:FF:000026">
    <property type="entry name" value="Protein/nucleic acid deglycase HchA"/>
    <property type="match status" value="1"/>
</dbReference>
<dbReference type="Gene3D" id="3.40.50.880">
    <property type="match status" value="1"/>
</dbReference>
<dbReference type="HAMAP" id="MF_01046">
    <property type="entry name" value="Deglycase_HchA"/>
    <property type="match status" value="1"/>
</dbReference>
<dbReference type="InterPro" id="IPR029062">
    <property type="entry name" value="Class_I_gatase-like"/>
</dbReference>
<dbReference type="InterPro" id="IPR017283">
    <property type="entry name" value="HchA"/>
</dbReference>
<dbReference type="InterPro" id="IPR050325">
    <property type="entry name" value="Prot/Nucl_acid_deglycase"/>
</dbReference>
<dbReference type="NCBIfam" id="NF003168">
    <property type="entry name" value="PRK04155.1"/>
    <property type="match status" value="1"/>
</dbReference>
<dbReference type="PANTHER" id="PTHR48094">
    <property type="entry name" value="PROTEIN/NUCLEIC ACID DEGLYCASE DJ-1-RELATED"/>
    <property type="match status" value="1"/>
</dbReference>
<dbReference type="PANTHER" id="PTHR48094:SF20">
    <property type="entry name" value="PROTEIN_NUCLEIC ACID DEGLYCASE 1"/>
    <property type="match status" value="1"/>
</dbReference>
<dbReference type="PIRSF" id="PIRSF037798">
    <property type="entry name" value="Chaperone_HchA"/>
    <property type="match status" value="1"/>
</dbReference>
<dbReference type="SUPFAM" id="SSF52317">
    <property type="entry name" value="Class I glutamine amidotransferase-like"/>
    <property type="match status" value="1"/>
</dbReference>
<name>HCHA_ECOLC</name>
<protein>
    <recommendedName>
        <fullName evidence="1">Protein/nucleic acid deglycase HchA</fullName>
        <ecNumber evidence="1">3.1.2.-</ecNumber>
        <ecNumber evidence="1">3.5.1.-</ecNumber>
        <ecNumber evidence="1">3.5.1.124</ecNumber>
    </recommendedName>
    <alternativeName>
        <fullName evidence="1">Maillard deglycase</fullName>
    </alternativeName>
</protein>
<comment type="function">
    <text evidence="1">Protein and nucleotide deglycase that catalyzes the deglycation of the Maillard adducts formed between amino groups of proteins or nucleotides and reactive carbonyl groups of glyoxals. Thus, functions as a protein deglycase that repairs methylglyoxal- and glyoxal-glycated proteins, and releases repaired proteins and lactate or glycolate, respectively. Deglycates cysteine, arginine and lysine residues in proteins, and thus reactivates these proteins by reversing glycation by glyoxals. Acts on early glycation intermediates (hemithioacetals and aminocarbinols), preventing the formation of Schiff bases and advanced glycation endproducts (AGE). Also functions as a nucleotide deglycase able to repair glycated guanine in the free nucleotide pool (GTP, GDP, GMP, dGTP) and in DNA and RNA. Is thus involved in a major nucleotide repair system named guanine glycation repair (GG repair), dedicated to reversing methylglyoxal and glyoxal damage via nucleotide sanitization and direct nucleic acid repair. Plays an important role in protecting cells from carbonyl stress.</text>
</comment>
<comment type="catalytic activity">
    <reaction evidence="1">
        <text>N(omega)-(1-hydroxy-2-oxopropyl)-L-arginyl-[protein] + H2O = lactate + L-arginyl-[protein] + H(+)</text>
        <dbReference type="Rhea" id="RHEA:49548"/>
        <dbReference type="Rhea" id="RHEA-COMP:10532"/>
        <dbReference type="Rhea" id="RHEA-COMP:12428"/>
        <dbReference type="ChEBI" id="CHEBI:15377"/>
        <dbReference type="ChEBI" id="CHEBI:15378"/>
        <dbReference type="ChEBI" id="CHEBI:24996"/>
        <dbReference type="ChEBI" id="CHEBI:29965"/>
        <dbReference type="ChEBI" id="CHEBI:131708"/>
        <dbReference type="EC" id="3.5.1.124"/>
    </reaction>
</comment>
<comment type="catalytic activity">
    <reaction evidence="1">
        <text>N(6)-(1-hydroxy-2-oxopropyl)-L-lysyl-[protein] + H2O = lactate + L-lysyl-[protein] + H(+)</text>
        <dbReference type="Rhea" id="RHEA:49552"/>
        <dbReference type="Rhea" id="RHEA-COMP:9752"/>
        <dbReference type="Rhea" id="RHEA-COMP:12429"/>
        <dbReference type="ChEBI" id="CHEBI:15377"/>
        <dbReference type="ChEBI" id="CHEBI:15378"/>
        <dbReference type="ChEBI" id="CHEBI:24996"/>
        <dbReference type="ChEBI" id="CHEBI:29969"/>
        <dbReference type="ChEBI" id="CHEBI:131709"/>
        <dbReference type="EC" id="3.5.1.124"/>
    </reaction>
</comment>
<comment type="catalytic activity">
    <reaction evidence="1">
        <text>S-(1-hydroxy-2-oxopropyl)-L-cysteinyl-[protein] + H2O = lactate + L-cysteinyl-[protein] + H(+)</text>
        <dbReference type="Rhea" id="RHEA:49556"/>
        <dbReference type="Rhea" id="RHEA-COMP:10131"/>
        <dbReference type="Rhea" id="RHEA-COMP:12430"/>
        <dbReference type="ChEBI" id="CHEBI:15377"/>
        <dbReference type="ChEBI" id="CHEBI:15378"/>
        <dbReference type="ChEBI" id="CHEBI:24996"/>
        <dbReference type="ChEBI" id="CHEBI:29950"/>
        <dbReference type="ChEBI" id="CHEBI:131710"/>
        <dbReference type="EC" id="3.5.1.124"/>
    </reaction>
</comment>
<comment type="catalytic activity">
    <reaction evidence="1">
        <text>N(omega)-(1-hydroxy-2-oxoethyl)-L-arginyl-[protein] + H2O = L-arginyl-[protein] + glycolate + H(+)</text>
        <dbReference type="Rhea" id="RHEA:57188"/>
        <dbReference type="Rhea" id="RHEA-COMP:10532"/>
        <dbReference type="Rhea" id="RHEA-COMP:14844"/>
        <dbReference type="ChEBI" id="CHEBI:15377"/>
        <dbReference type="ChEBI" id="CHEBI:15378"/>
        <dbReference type="ChEBI" id="CHEBI:29805"/>
        <dbReference type="ChEBI" id="CHEBI:29965"/>
        <dbReference type="ChEBI" id="CHEBI:141553"/>
        <dbReference type="EC" id="3.5.1.124"/>
    </reaction>
</comment>
<comment type="catalytic activity">
    <reaction evidence="1">
        <text>N(6)-(1-hydroxy-2-oxoethyl)-L-lysyl-[protein] + H2O = glycolate + L-lysyl-[protein] + H(+)</text>
        <dbReference type="Rhea" id="RHEA:57192"/>
        <dbReference type="Rhea" id="RHEA-COMP:9752"/>
        <dbReference type="Rhea" id="RHEA-COMP:14845"/>
        <dbReference type="ChEBI" id="CHEBI:15377"/>
        <dbReference type="ChEBI" id="CHEBI:15378"/>
        <dbReference type="ChEBI" id="CHEBI:29805"/>
        <dbReference type="ChEBI" id="CHEBI:29969"/>
        <dbReference type="ChEBI" id="CHEBI:141554"/>
        <dbReference type="EC" id="3.5.1.124"/>
    </reaction>
</comment>
<comment type="catalytic activity">
    <reaction evidence="1">
        <text>S-(1-hydroxy-2-oxoethyl)-L-cysteinyl-[protein] + H2O = glycolate + L-cysteinyl-[protein] + H(+)</text>
        <dbReference type="Rhea" id="RHEA:57196"/>
        <dbReference type="Rhea" id="RHEA-COMP:10131"/>
        <dbReference type="Rhea" id="RHEA-COMP:14846"/>
        <dbReference type="ChEBI" id="CHEBI:15377"/>
        <dbReference type="ChEBI" id="CHEBI:15378"/>
        <dbReference type="ChEBI" id="CHEBI:29805"/>
        <dbReference type="ChEBI" id="CHEBI:29950"/>
        <dbReference type="ChEBI" id="CHEBI:141555"/>
        <dbReference type="EC" id="3.5.1.124"/>
    </reaction>
</comment>
<comment type="catalytic activity">
    <reaction evidence="1">
        <text>N(2)-(1-hydroxy-2-oxopropyl)-dGTP + H2O = lactate + dGTP + H(+)</text>
        <dbReference type="Rhea" id="RHEA:57244"/>
        <dbReference type="ChEBI" id="CHEBI:15377"/>
        <dbReference type="ChEBI" id="CHEBI:15378"/>
        <dbReference type="ChEBI" id="CHEBI:24996"/>
        <dbReference type="ChEBI" id="CHEBI:61429"/>
        <dbReference type="ChEBI" id="CHEBI:141569"/>
    </reaction>
</comment>
<comment type="catalytic activity">
    <reaction evidence="1">
        <text>N(2)-(1-hydroxy-2-oxopropyl)-GTP + H2O = lactate + GTP + H(+)</text>
        <dbReference type="Rhea" id="RHEA:57256"/>
        <dbReference type="ChEBI" id="CHEBI:15377"/>
        <dbReference type="ChEBI" id="CHEBI:15378"/>
        <dbReference type="ChEBI" id="CHEBI:24996"/>
        <dbReference type="ChEBI" id="CHEBI:37565"/>
        <dbReference type="ChEBI" id="CHEBI:141570"/>
    </reaction>
</comment>
<comment type="catalytic activity">
    <reaction evidence="1">
        <text>N(2)-(1-hydroxy-2-oxopropyl)-GDP + H2O = lactate + GDP + H(+)</text>
        <dbReference type="Rhea" id="RHEA:57260"/>
        <dbReference type="ChEBI" id="CHEBI:15377"/>
        <dbReference type="ChEBI" id="CHEBI:15378"/>
        <dbReference type="ChEBI" id="CHEBI:24996"/>
        <dbReference type="ChEBI" id="CHEBI:58189"/>
        <dbReference type="ChEBI" id="CHEBI:141573"/>
    </reaction>
</comment>
<comment type="catalytic activity">
    <reaction evidence="1">
        <text>N(2)-(1-hydroxy-2-oxopropyl)-GMP + H2O = lactate + GMP + H(+)</text>
        <dbReference type="Rhea" id="RHEA:57268"/>
        <dbReference type="ChEBI" id="CHEBI:15377"/>
        <dbReference type="ChEBI" id="CHEBI:15378"/>
        <dbReference type="ChEBI" id="CHEBI:24996"/>
        <dbReference type="ChEBI" id="CHEBI:58115"/>
        <dbReference type="ChEBI" id="CHEBI:141575"/>
    </reaction>
</comment>
<comment type="catalytic activity">
    <reaction evidence="1">
        <text>N(2)-(1-hydroxy-2-oxoethyl)-dGTP + H2O = dGTP + glycolate + H(+)</text>
        <dbReference type="Rhea" id="RHEA:57248"/>
        <dbReference type="ChEBI" id="CHEBI:15377"/>
        <dbReference type="ChEBI" id="CHEBI:15378"/>
        <dbReference type="ChEBI" id="CHEBI:29805"/>
        <dbReference type="ChEBI" id="CHEBI:61429"/>
        <dbReference type="ChEBI" id="CHEBI:141572"/>
    </reaction>
</comment>
<comment type="catalytic activity">
    <reaction evidence="1">
        <text>N(2)-(1-hydroxy-2-oxoethyl)-GTP + H2O = glycolate + GTP + H(+)</text>
        <dbReference type="Rhea" id="RHEA:57252"/>
        <dbReference type="ChEBI" id="CHEBI:15377"/>
        <dbReference type="ChEBI" id="CHEBI:15378"/>
        <dbReference type="ChEBI" id="CHEBI:29805"/>
        <dbReference type="ChEBI" id="CHEBI:37565"/>
        <dbReference type="ChEBI" id="CHEBI:141571"/>
    </reaction>
</comment>
<comment type="catalytic activity">
    <reaction evidence="1">
        <text>N(2)-(1-hydroxy-2-oxoethyl)-GDP + H2O = glycolate + GDP + H(+)</text>
        <dbReference type="Rhea" id="RHEA:57264"/>
        <dbReference type="ChEBI" id="CHEBI:15377"/>
        <dbReference type="ChEBI" id="CHEBI:15378"/>
        <dbReference type="ChEBI" id="CHEBI:29805"/>
        <dbReference type="ChEBI" id="CHEBI:58189"/>
        <dbReference type="ChEBI" id="CHEBI:141574"/>
    </reaction>
</comment>
<comment type="catalytic activity">
    <reaction evidence="1">
        <text>N(2)-(1-hydroxy-2-oxoethyl)-GMP + H2O = glycolate + GMP + H(+)</text>
        <dbReference type="Rhea" id="RHEA:57304"/>
        <dbReference type="ChEBI" id="CHEBI:15377"/>
        <dbReference type="ChEBI" id="CHEBI:15378"/>
        <dbReference type="ChEBI" id="CHEBI:29805"/>
        <dbReference type="ChEBI" id="CHEBI:58115"/>
        <dbReference type="ChEBI" id="CHEBI:141576"/>
    </reaction>
</comment>
<comment type="catalytic activity">
    <reaction evidence="1">
        <text>an N(2)-(1-hydroxy-2-oxopropyl)-guanosine in RNA + H2O = a guanosine in RNA + lactate + H(+)</text>
        <dbReference type="Rhea" id="RHEA:57288"/>
        <dbReference type="Rhea" id="RHEA-COMP:14855"/>
        <dbReference type="Rhea" id="RHEA-COMP:14858"/>
        <dbReference type="ChEBI" id="CHEBI:15377"/>
        <dbReference type="ChEBI" id="CHEBI:15378"/>
        <dbReference type="ChEBI" id="CHEBI:24996"/>
        <dbReference type="ChEBI" id="CHEBI:74269"/>
        <dbReference type="ChEBI" id="CHEBI:141580"/>
    </reaction>
</comment>
<comment type="catalytic activity">
    <reaction evidence="1">
        <text>an N(2)-(1-hydroxy-2-oxopropyl)-2'-deoxyguanosine in DNA + H2O = a 2'-deoxyguanosine in DNA + lactate + H(+)</text>
        <dbReference type="Rhea" id="RHEA:57300"/>
        <dbReference type="Rhea" id="RHEA-COMP:11367"/>
        <dbReference type="Rhea" id="RHEA-COMP:14856"/>
        <dbReference type="ChEBI" id="CHEBI:15377"/>
        <dbReference type="ChEBI" id="CHEBI:15378"/>
        <dbReference type="ChEBI" id="CHEBI:24996"/>
        <dbReference type="ChEBI" id="CHEBI:85445"/>
        <dbReference type="ChEBI" id="CHEBI:141578"/>
    </reaction>
</comment>
<comment type="catalytic activity">
    <reaction evidence="1">
        <text>an N(2)-(1-hydroxy-2-oxoethyl)-guanosine in RNA + H2O = a guanosine in RNA + glycolate + H(+)</text>
        <dbReference type="Rhea" id="RHEA:57292"/>
        <dbReference type="Rhea" id="RHEA-COMP:14855"/>
        <dbReference type="Rhea" id="RHEA-COMP:14859"/>
        <dbReference type="ChEBI" id="CHEBI:15377"/>
        <dbReference type="ChEBI" id="CHEBI:15378"/>
        <dbReference type="ChEBI" id="CHEBI:29805"/>
        <dbReference type="ChEBI" id="CHEBI:74269"/>
        <dbReference type="ChEBI" id="CHEBI:141581"/>
    </reaction>
</comment>
<comment type="catalytic activity">
    <reaction evidence="1">
        <text>an N(2)-(1-hydroxy-2-oxoethyl)-2'-deoxyguanosine in DNA + H2O = a 2'-deoxyguanosine in DNA + glycolate + H(+)</text>
        <dbReference type="Rhea" id="RHEA:57296"/>
        <dbReference type="Rhea" id="RHEA-COMP:11367"/>
        <dbReference type="Rhea" id="RHEA-COMP:14857"/>
        <dbReference type="ChEBI" id="CHEBI:15377"/>
        <dbReference type="ChEBI" id="CHEBI:15378"/>
        <dbReference type="ChEBI" id="CHEBI:29805"/>
        <dbReference type="ChEBI" id="CHEBI:85445"/>
        <dbReference type="ChEBI" id="CHEBI:141579"/>
    </reaction>
</comment>
<comment type="subunit">
    <text evidence="1">Homodimer.</text>
</comment>
<comment type="subcellular location">
    <subcellularLocation>
        <location evidence="1">Cytoplasm</location>
    </subcellularLocation>
</comment>
<comment type="induction">
    <text evidence="1">By heat shock.</text>
</comment>
<comment type="similarity">
    <text evidence="1">Belongs to the peptidase C56 family. HchA subfamily.</text>
</comment>
<feature type="chain" id="PRO_1000084409" description="Protein/nucleic acid deglycase HchA">
    <location>
        <begin position="1"/>
        <end position="283"/>
    </location>
</feature>
<feature type="active site" description="Nucleophile" evidence="1">
    <location>
        <position position="185"/>
    </location>
</feature>
<feature type="binding site" evidence="1">
    <location>
        <position position="86"/>
    </location>
    <ligand>
        <name>Zn(2+)</name>
        <dbReference type="ChEBI" id="CHEBI:29105"/>
    </ligand>
</feature>
<feature type="binding site" evidence="1">
    <location>
        <position position="91"/>
    </location>
    <ligand>
        <name>Zn(2+)</name>
        <dbReference type="ChEBI" id="CHEBI:29105"/>
    </ligand>
</feature>
<feature type="binding site" evidence="1">
    <location>
        <position position="123"/>
    </location>
    <ligand>
        <name>Zn(2+)</name>
        <dbReference type="ChEBI" id="CHEBI:29105"/>
    </ligand>
</feature>
<accession>B1IZU5</accession>